<dbReference type="EC" id="2.1.3.2"/>
<dbReference type="EMBL" id="D10052">
    <property type="protein sequence ID" value="BAA00941.1"/>
    <property type="status" value="ALT_FRAME"/>
    <property type="molecule type" value="Genomic_DNA"/>
</dbReference>
<dbReference type="EMBL" id="AE017226">
    <property type="protein sequence ID" value="AAS10627.1"/>
    <property type="molecule type" value="Genomic_DNA"/>
</dbReference>
<dbReference type="PIR" id="A48948">
    <property type="entry name" value="A48948"/>
</dbReference>
<dbReference type="RefSeq" id="NP_970746.1">
    <property type="nucleotide sequence ID" value="NC_002967.9"/>
</dbReference>
<dbReference type="RefSeq" id="WP_002666669.1">
    <property type="nucleotide sequence ID" value="NC_002967.9"/>
</dbReference>
<dbReference type="SMR" id="Q04595"/>
<dbReference type="STRING" id="243275.TDE_0129"/>
<dbReference type="PaxDb" id="243275-TDE_0129"/>
<dbReference type="GeneID" id="2739612"/>
<dbReference type="KEGG" id="tde:TDE_0129"/>
<dbReference type="PATRIC" id="fig|243275.7.peg.129"/>
<dbReference type="eggNOG" id="COG0540">
    <property type="taxonomic scope" value="Bacteria"/>
</dbReference>
<dbReference type="eggNOG" id="COG1781">
    <property type="taxonomic scope" value="Bacteria"/>
</dbReference>
<dbReference type="HOGENOM" id="CLU_039403_0_0_12"/>
<dbReference type="OrthoDB" id="9802587at2"/>
<dbReference type="UniPathway" id="UPA00070">
    <property type="reaction ID" value="UER00116"/>
</dbReference>
<dbReference type="Proteomes" id="UP000008212">
    <property type="component" value="Chromosome"/>
</dbReference>
<dbReference type="GO" id="GO:0009347">
    <property type="term" value="C:aspartate carbamoyltransferase complex"/>
    <property type="evidence" value="ECO:0007669"/>
    <property type="project" value="InterPro"/>
</dbReference>
<dbReference type="GO" id="GO:0016597">
    <property type="term" value="F:amino acid binding"/>
    <property type="evidence" value="ECO:0007669"/>
    <property type="project" value="InterPro"/>
</dbReference>
<dbReference type="GO" id="GO:0004070">
    <property type="term" value="F:aspartate carbamoyltransferase activity"/>
    <property type="evidence" value="ECO:0007669"/>
    <property type="project" value="UniProtKB-EC"/>
</dbReference>
<dbReference type="GO" id="GO:0046872">
    <property type="term" value="F:metal ion binding"/>
    <property type="evidence" value="ECO:0007669"/>
    <property type="project" value="UniProtKB-KW"/>
</dbReference>
<dbReference type="GO" id="GO:0006207">
    <property type="term" value="P:'de novo' pyrimidine nucleobase biosynthetic process"/>
    <property type="evidence" value="ECO:0007669"/>
    <property type="project" value="InterPro"/>
</dbReference>
<dbReference type="GO" id="GO:0044205">
    <property type="term" value="P:'de novo' UMP biosynthetic process"/>
    <property type="evidence" value="ECO:0007669"/>
    <property type="project" value="UniProtKB-UniPathway"/>
</dbReference>
<dbReference type="GO" id="GO:0006520">
    <property type="term" value="P:amino acid metabolic process"/>
    <property type="evidence" value="ECO:0007669"/>
    <property type="project" value="InterPro"/>
</dbReference>
<dbReference type="Gene3D" id="3.30.70.140">
    <property type="entry name" value="Aspartate carbamoyltransferase regulatory subunit, N-terminal domain"/>
    <property type="match status" value="1"/>
</dbReference>
<dbReference type="Gene3D" id="3.40.50.1370">
    <property type="entry name" value="Aspartate/ornithine carbamoyltransferase"/>
    <property type="match status" value="2"/>
</dbReference>
<dbReference type="InterPro" id="IPR006132">
    <property type="entry name" value="Asp/Orn_carbamoyltranf_P-bd"/>
</dbReference>
<dbReference type="InterPro" id="IPR006130">
    <property type="entry name" value="Asp/Orn_carbamoylTrfase"/>
</dbReference>
<dbReference type="InterPro" id="IPR036901">
    <property type="entry name" value="Asp/Orn_carbamoylTrfase_sf"/>
</dbReference>
<dbReference type="InterPro" id="IPR002082">
    <property type="entry name" value="Asp_carbamoyltransf"/>
</dbReference>
<dbReference type="InterPro" id="IPR006131">
    <property type="entry name" value="Asp_carbamoyltransf_Asp/Orn-bd"/>
</dbReference>
<dbReference type="InterPro" id="IPR020545">
    <property type="entry name" value="Asp_carbamoyltransf_reg_N"/>
</dbReference>
<dbReference type="InterPro" id="IPR002801">
    <property type="entry name" value="Asp_carbamoylTrfase_reg"/>
</dbReference>
<dbReference type="InterPro" id="IPR020542">
    <property type="entry name" value="Asp_carbamoyltrfase_reg_C"/>
</dbReference>
<dbReference type="InterPro" id="IPR036792">
    <property type="entry name" value="Asp_carbatrfase_reg_C_sf"/>
</dbReference>
<dbReference type="InterPro" id="IPR036793">
    <property type="entry name" value="Asp_carbatrfase_reg_N_sf"/>
</dbReference>
<dbReference type="NCBIfam" id="TIGR00670">
    <property type="entry name" value="asp_carb_tr"/>
    <property type="match status" value="1"/>
</dbReference>
<dbReference type="NCBIfam" id="NF009916">
    <property type="entry name" value="PRK13376.1"/>
    <property type="match status" value="1"/>
</dbReference>
<dbReference type="PANTHER" id="PTHR35805">
    <property type="entry name" value="ASPARTATE CARBAMOYLTRANSFERASE REGULATORY CHAIN"/>
    <property type="match status" value="1"/>
</dbReference>
<dbReference type="PANTHER" id="PTHR35805:SF1">
    <property type="entry name" value="ASPARTATE CARBAMOYLTRANSFERASE REGULATORY CHAIN"/>
    <property type="match status" value="1"/>
</dbReference>
<dbReference type="Pfam" id="PF00185">
    <property type="entry name" value="OTCace"/>
    <property type="match status" value="1"/>
</dbReference>
<dbReference type="Pfam" id="PF02729">
    <property type="entry name" value="OTCace_N"/>
    <property type="match status" value="1"/>
</dbReference>
<dbReference type="Pfam" id="PF01948">
    <property type="entry name" value="PyrI"/>
    <property type="match status" value="1"/>
</dbReference>
<dbReference type="Pfam" id="PF02748">
    <property type="entry name" value="PyrI_C"/>
    <property type="match status" value="1"/>
</dbReference>
<dbReference type="PRINTS" id="PR00100">
    <property type="entry name" value="AOTCASE"/>
</dbReference>
<dbReference type="PRINTS" id="PR00101">
    <property type="entry name" value="ATCASE"/>
</dbReference>
<dbReference type="SUPFAM" id="SSF57825">
    <property type="entry name" value="Aspartate carbamoyltransferase, Regulatory-chain, C-terminal domain"/>
    <property type="match status" value="1"/>
</dbReference>
<dbReference type="SUPFAM" id="SSF54893">
    <property type="entry name" value="Aspartate carbamoyltransferase, Regulatory-chain, N-terminal domain"/>
    <property type="match status" value="1"/>
</dbReference>
<dbReference type="SUPFAM" id="SSF53671">
    <property type="entry name" value="Aspartate/ornithine carbamoyltransferase"/>
    <property type="match status" value="1"/>
</dbReference>
<dbReference type="PROSITE" id="PS00097">
    <property type="entry name" value="CARBAMOYLTRANSFERASE"/>
    <property type="match status" value="1"/>
</dbReference>
<gene>
    <name type="primary">pyrBI</name>
    <name type="synonym">pyrB</name>
    <name type="ordered locus">TDE_0129</name>
</gene>
<organism>
    <name type="scientific">Treponema denticola (strain ATCC 35405 / DSM 14222 / CIP 103919 / JCM 8153 / KCTC 15104)</name>
    <dbReference type="NCBI Taxonomy" id="243275"/>
    <lineage>
        <taxon>Bacteria</taxon>
        <taxon>Pseudomonadati</taxon>
        <taxon>Spirochaetota</taxon>
        <taxon>Spirochaetia</taxon>
        <taxon>Spirochaetales</taxon>
        <taxon>Treponemataceae</taxon>
        <taxon>Treponema</taxon>
    </lineage>
</organism>
<name>PYRB_TREDE</name>
<sequence>MENKFMGRSLTVIDDLSIDERKYLFDKTKRLKKAIQEDDQKVMDEFRINDKDFGIYEVFLEPSTRTKESFRNAAKFHQVKLSDLAAESSSFNKGESYADTFNTLAGYQNSIFIVRSKVEGVCRWLEDEAQAFYQRNNLKRKPAFINAGDGKHEHPTQELLDEFTFIEDNNWSFDKIHIALVGDLYHGRTVHSKADGLKIFKSVKVDLIAPAELAMPEYYKVRMQENGFTVREFSSIEEYLRQADVALIWYFTRPQLERMGEQVLKKQDELRRSITFRKEFIEKLPENTRFYHPLPRHRVHPTIPTFLDATPLNGWERQSINGMYVRMVLLSMIAGKIGDDYKGPEPKSCERVEDEDYIVEVPINNSKESKVETFSEGVRPIQNGIVIDHICRGDKPSVIRHHMSKIINVMGLEEGKGGEWVSTSTKDKGTFKGIIFRPGEYKFSRADLKRLSAVASSCTLNLIKDGKIQSKYRTHLPPRIYNFEDLICKNEACISHPAQSEGVPAIFYRTIDNRYACQYCGTIHTFKEIWGEKKN</sequence>
<feature type="chain" id="PRO_0000113241" description="Protein PyrBI">
    <location>
        <begin position="1"/>
        <end position="535"/>
    </location>
</feature>
<feature type="region of interest" description="Aspartate carbamoyltransferase">
    <location>
        <begin position="1"/>
        <end position="341"/>
    </location>
</feature>
<feature type="region of interest" description="Linker">
    <location>
        <begin position="342"/>
        <end position="370"/>
    </location>
</feature>
<feature type="region of interest" description="Aspartate carbamoyltransferase regulatory region">
    <location>
        <begin position="371"/>
        <end position="535"/>
    </location>
</feature>
<feature type="binding site" evidence="1">
    <location>
        <position position="488"/>
    </location>
    <ligand>
        <name>Zn(2+)</name>
        <dbReference type="ChEBI" id="CHEBI:29105"/>
    </ligand>
</feature>
<feature type="binding site" evidence="1">
    <location>
        <position position="493"/>
    </location>
    <ligand>
        <name>Zn(2+)</name>
        <dbReference type="ChEBI" id="CHEBI:29105"/>
    </ligand>
</feature>
<feature type="binding site" evidence="1">
    <location>
        <position position="517"/>
    </location>
    <ligand>
        <name>Zn(2+)</name>
        <dbReference type="ChEBI" id="CHEBI:29105"/>
    </ligand>
</feature>
<feature type="binding site" evidence="1">
    <location>
        <position position="520"/>
    </location>
    <ligand>
        <name>Zn(2+)</name>
        <dbReference type="ChEBI" id="CHEBI:29105"/>
    </ligand>
</feature>
<feature type="sequence conflict" description="In Ref. 1; BAA00941." evidence="2" ref="1">
    <original>K</original>
    <variation>E</variation>
    <location>
        <position position="117"/>
    </location>
</feature>
<keyword id="KW-0479">Metal-binding</keyword>
<keyword id="KW-0511">Multifunctional enzyme</keyword>
<keyword id="KW-0665">Pyrimidine biosynthesis</keyword>
<keyword id="KW-1185">Reference proteome</keyword>
<keyword id="KW-0808">Transferase</keyword>
<keyword id="KW-0862">Zinc</keyword>
<protein>
    <recommendedName>
        <fullName>Protein PyrBI</fullName>
    </recommendedName>
    <domain>
        <recommendedName>
            <fullName>Aspartate carbamoyltransferase</fullName>
            <ecNumber>2.1.3.2</ecNumber>
        </recommendedName>
        <alternativeName>
            <fullName>Aspartate transcarbamylase</fullName>
            <shortName>ATCase</shortName>
        </alternativeName>
    </domain>
    <domain>
        <recommendedName>
            <fullName>Aspartate carbamoyltransferase regulatory region</fullName>
        </recommendedName>
    </domain>
</protein>
<comment type="catalytic activity">
    <reaction>
        <text>carbamoyl phosphate + L-aspartate = N-carbamoyl-L-aspartate + phosphate + H(+)</text>
        <dbReference type="Rhea" id="RHEA:20013"/>
        <dbReference type="ChEBI" id="CHEBI:15378"/>
        <dbReference type="ChEBI" id="CHEBI:29991"/>
        <dbReference type="ChEBI" id="CHEBI:32814"/>
        <dbReference type="ChEBI" id="CHEBI:43474"/>
        <dbReference type="ChEBI" id="CHEBI:58228"/>
        <dbReference type="EC" id="2.1.3.2"/>
    </reaction>
</comment>
<comment type="pathway">
    <text>Pyrimidine metabolism; UMP biosynthesis via de novo pathway; (S)-dihydroorotate from bicarbonate: step 2/3.</text>
</comment>
<comment type="similarity">
    <text evidence="2">In the N-terminal section; belongs to the aspartate/ornithine carbamoyltransferase superfamily. ATCase family.</text>
</comment>
<comment type="similarity">
    <text evidence="2">In the C-terminal section; belongs to the PyrI family.</text>
</comment>
<comment type="sequence caution" evidence="2">
    <conflict type="frameshift">
        <sequence resource="EMBL-CDS" id="BAA00941"/>
    </conflict>
</comment>
<proteinExistence type="inferred from homology"/>
<accession>Q04595</accession>
<reference key="1">
    <citation type="journal article" date="1992" name="Appl. Environ. Microbiol.">
        <title>Cloning and expression of the aspartate carbamoyltransferase gene from Treponema denticola.</title>
        <authorList>
            <person name="Ishihara K."/>
            <person name="Ishihara M."/>
            <person name="Takazoe I."/>
            <person name="Okuda K."/>
        </authorList>
    </citation>
    <scope>NUCLEOTIDE SEQUENCE [GENOMIC DNA]</scope>
    <source>
        <strain>ATCC 33520 / W / CIP 103917</strain>
    </source>
</reference>
<reference key="2">
    <citation type="journal article" date="2004" name="Proc. Natl. Acad. Sci. U.S.A.">
        <title>Comparison of the genome of the oral pathogen Treponema denticola with other spirochete genomes.</title>
        <authorList>
            <person name="Seshadri R."/>
            <person name="Myers G.S.A."/>
            <person name="Tettelin H."/>
            <person name="Eisen J.A."/>
            <person name="Heidelberg J.F."/>
            <person name="Dodson R.J."/>
            <person name="Davidsen T.M."/>
            <person name="DeBoy R.T."/>
            <person name="Fouts D.E."/>
            <person name="Haft D.H."/>
            <person name="Selengut J."/>
            <person name="Ren Q."/>
            <person name="Brinkac L.M."/>
            <person name="Madupu R."/>
            <person name="Kolonay J.F."/>
            <person name="Durkin S.A."/>
            <person name="Daugherty S.C."/>
            <person name="Shetty J."/>
            <person name="Shvartsbeyn A."/>
            <person name="Gebregeorgis E."/>
            <person name="Geer K."/>
            <person name="Tsegaye G."/>
            <person name="Malek J.A."/>
            <person name="Ayodeji B."/>
            <person name="Shatsman S."/>
            <person name="McLeod M.P."/>
            <person name="Smajs D."/>
            <person name="Howell J.K."/>
            <person name="Pal S."/>
            <person name="Amin A."/>
            <person name="Vashisth P."/>
            <person name="McNeill T.Z."/>
            <person name="Xiang Q."/>
            <person name="Sodergren E."/>
            <person name="Baca E."/>
            <person name="Weinstock G.M."/>
            <person name="Norris S.J."/>
            <person name="Fraser C.M."/>
            <person name="Paulsen I.T."/>
        </authorList>
    </citation>
    <scope>NUCLEOTIDE SEQUENCE [LARGE SCALE GENOMIC DNA]</scope>
    <source>
        <strain>ATCC 35405 / DSM 14222 / CIP 103919 / JCM 8153 / KCTC 15104</strain>
    </source>
</reference>
<evidence type="ECO:0000250" key="1"/>
<evidence type="ECO:0000305" key="2"/>